<protein>
    <recommendedName>
        <fullName evidence="1">Urease accessory protein UreG</fullName>
    </recommendedName>
</protein>
<sequence length="229" mass="24706">MNTPLHHIKNRTKILPPLRVGIGGPVGSGKTTLLEMLCKGMRERYDLVAITNDIYTKEDQRLLTESGALPADRIMGVETGGCPHTAIREDASINLEAIDRMLVDFPDADIVFIESGGDNLAATFSPELSDLTIYVIDVAAGEKIPRKGGPGITKSDLFVINKTDLAPYVGASLDVMAADTTRMRTTVKGLKPFVMTNLKTLSGVQEVMAFIESKGMLRSGDAATLRDGR</sequence>
<feature type="chain" id="PRO_0000347441" description="Urease accessory protein UreG">
    <location>
        <begin position="1"/>
        <end position="229"/>
    </location>
</feature>
<feature type="binding site" evidence="1">
    <location>
        <begin position="24"/>
        <end position="31"/>
    </location>
    <ligand>
        <name>GTP</name>
        <dbReference type="ChEBI" id="CHEBI:37565"/>
    </ligand>
</feature>
<keyword id="KW-0143">Chaperone</keyword>
<keyword id="KW-0963">Cytoplasm</keyword>
<keyword id="KW-0342">GTP-binding</keyword>
<keyword id="KW-0996">Nickel insertion</keyword>
<keyword id="KW-0547">Nucleotide-binding</keyword>
<keyword id="KW-1185">Reference proteome</keyword>
<accession>Q21SY6</accession>
<evidence type="ECO:0000255" key="1">
    <source>
        <dbReference type="HAMAP-Rule" id="MF_01389"/>
    </source>
</evidence>
<gene>
    <name evidence="1" type="primary">ureG</name>
    <name type="ordered locus">Rfer_3408</name>
</gene>
<reference key="1">
    <citation type="submission" date="2006-02" db="EMBL/GenBank/DDBJ databases">
        <title>Complete sequence of chromosome of Rhodoferax ferrireducens DSM 15236.</title>
        <authorList>
            <person name="Copeland A."/>
            <person name="Lucas S."/>
            <person name="Lapidus A."/>
            <person name="Barry K."/>
            <person name="Detter J.C."/>
            <person name="Glavina del Rio T."/>
            <person name="Hammon N."/>
            <person name="Israni S."/>
            <person name="Pitluck S."/>
            <person name="Brettin T."/>
            <person name="Bruce D."/>
            <person name="Han C."/>
            <person name="Tapia R."/>
            <person name="Gilna P."/>
            <person name="Kiss H."/>
            <person name="Schmutz J."/>
            <person name="Larimer F."/>
            <person name="Land M."/>
            <person name="Kyrpides N."/>
            <person name="Ivanova N."/>
            <person name="Richardson P."/>
        </authorList>
    </citation>
    <scope>NUCLEOTIDE SEQUENCE [LARGE SCALE GENOMIC DNA]</scope>
    <source>
        <strain>ATCC BAA-621 / DSM 15236 / T118</strain>
    </source>
</reference>
<name>UREG_ALBFT</name>
<organism>
    <name type="scientific">Albidiferax ferrireducens (strain ATCC BAA-621 / DSM 15236 / T118)</name>
    <name type="common">Rhodoferax ferrireducens</name>
    <dbReference type="NCBI Taxonomy" id="338969"/>
    <lineage>
        <taxon>Bacteria</taxon>
        <taxon>Pseudomonadati</taxon>
        <taxon>Pseudomonadota</taxon>
        <taxon>Betaproteobacteria</taxon>
        <taxon>Burkholderiales</taxon>
        <taxon>Comamonadaceae</taxon>
        <taxon>Rhodoferax</taxon>
    </lineage>
</organism>
<comment type="function">
    <text evidence="1">Facilitates the functional incorporation of the urease nickel metallocenter. This process requires GTP hydrolysis, probably effectuated by UreG.</text>
</comment>
<comment type="subunit">
    <text evidence="1">Homodimer. UreD, UreF and UreG form a complex that acts as a GTP-hydrolysis-dependent molecular chaperone, activating the urease apoprotein by helping to assemble the nickel containing metallocenter of UreC. The UreE protein probably delivers the nickel.</text>
</comment>
<comment type="subcellular location">
    <subcellularLocation>
        <location evidence="1">Cytoplasm</location>
    </subcellularLocation>
</comment>
<comment type="similarity">
    <text evidence="1">Belongs to the SIMIBI class G3E GTPase family. UreG subfamily.</text>
</comment>
<proteinExistence type="inferred from homology"/>
<dbReference type="EMBL" id="CP000267">
    <property type="protein sequence ID" value="ABD71117.1"/>
    <property type="molecule type" value="Genomic_DNA"/>
</dbReference>
<dbReference type="RefSeq" id="WP_011465680.1">
    <property type="nucleotide sequence ID" value="NC_007908.1"/>
</dbReference>
<dbReference type="SMR" id="Q21SY6"/>
<dbReference type="STRING" id="338969.Rfer_3408"/>
<dbReference type="KEGG" id="rfr:Rfer_3408"/>
<dbReference type="eggNOG" id="COG0378">
    <property type="taxonomic scope" value="Bacteria"/>
</dbReference>
<dbReference type="HOGENOM" id="CLU_072144_1_0_4"/>
<dbReference type="OrthoDB" id="9802035at2"/>
<dbReference type="Proteomes" id="UP000008332">
    <property type="component" value="Chromosome"/>
</dbReference>
<dbReference type="GO" id="GO:0005737">
    <property type="term" value="C:cytoplasm"/>
    <property type="evidence" value="ECO:0007669"/>
    <property type="project" value="UniProtKB-SubCell"/>
</dbReference>
<dbReference type="GO" id="GO:0005525">
    <property type="term" value="F:GTP binding"/>
    <property type="evidence" value="ECO:0007669"/>
    <property type="project" value="UniProtKB-KW"/>
</dbReference>
<dbReference type="GO" id="GO:0003924">
    <property type="term" value="F:GTPase activity"/>
    <property type="evidence" value="ECO:0007669"/>
    <property type="project" value="InterPro"/>
</dbReference>
<dbReference type="GO" id="GO:0016151">
    <property type="term" value="F:nickel cation binding"/>
    <property type="evidence" value="ECO:0007669"/>
    <property type="project" value="UniProtKB-UniRule"/>
</dbReference>
<dbReference type="GO" id="GO:0043419">
    <property type="term" value="P:urea catabolic process"/>
    <property type="evidence" value="ECO:0007669"/>
    <property type="project" value="InterPro"/>
</dbReference>
<dbReference type="CDD" id="cd05540">
    <property type="entry name" value="UreG"/>
    <property type="match status" value="1"/>
</dbReference>
<dbReference type="FunFam" id="3.40.50.300:FF:000208">
    <property type="entry name" value="Urease accessory protein UreG"/>
    <property type="match status" value="1"/>
</dbReference>
<dbReference type="Gene3D" id="3.40.50.300">
    <property type="entry name" value="P-loop containing nucleotide triphosphate hydrolases"/>
    <property type="match status" value="1"/>
</dbReference>
<dbReference type="HAMAP" id="MF_01389">
    <property type="entry name" value="UreG"/>
    <property type="match status" value="1"/>
</dbReference>
<dbReference type="InterPro" id="IPR003495">
    <property type="entry name" value="CobW/HypB/UreG_nucleotide-bd"/>
</dbReference>
<dbReference type="InterPro" id="IPR027417">
    <property type="entry name" value="P-loop_NTPase"/>
</dbReference>
<dbReference type="InterPro" id="IPR004400">
    <property type="entry name" value="UreG"/>
</dbReference>
<dbReference type="NCBIfam" id="TIGR00101">
    <property type="entry name" value="ureG"/>
    <property type="match status" value="1"/>
</dbReference>
<dbReference type="PANTHER" id="PTHR31715">
    <property type="entry name" value="UREASE ACCESSORY PROTEIN G"/>
    <property type="match status" value="1"/>
</dbReference>
<dbReference type="PANTHER" id="PTHR31715:SF0">
    <property type="entry name" value="UREASE ACCESSORY PROTEIN G"/>
    <property type="match status" value="1"/>
</dbReference>
<dbReference type="Pfam" id="PF02492">
    <property type="entry name" value="cobW"/>
    <property type="match status" value="1"/>
</dbReference>
<dbReference type="PIRSF" id="PIRSF005624">
    <property type="entry name" value="Ni-bind_GTPase"/>
    <property type="match status" value="1"/>
</dbReference>
<dbReference type="SUPFAM" id="SSF52540">
    <property type="entry name" value="P-loop containing nucleoside triphosphate hydrolases"/>
    <property type="match status" value="1"/>
</dbReference>